<name>MATRX_MEASY</name>
<dbReference type="SMR" id="P36356"/>
<dbReference type="GO" id="GO:0020002">
    <property type="term" value="C:host cell plasma membrane"/>
    <property type="evidence" value="ECO:0007669"/>
    <property type="project" value="UniProtKB-SubCell"/>
</dbReference>
<dbReference type="GO" id="GO:0016020">
    <property type="term" value="C:membrane"/>
    <property type="evidence" value="ECO:0007669"/>
    <property type="project" value="UniProtKB-KW"/>
</dbReference>
<dbReference type="GO" id="GO:0019031">
    <property type="term" value="C:viral envelope"/>
    <property type="evidence" value="ECO:0007669"/>
    <property type="project" value="UniProtKB-KW"/>
</dbReference>
<dbReference type="GO" id="GO:0008289">
    <property type="term" value="F:lipid binding"/>
    <property type="evidence" value="ECO:0007669"/>
    <property type="project" value="UniProtKB-KW"/>
</dbReference>
<dbReference type="GO" id="GO:0039660">
    <property type="term" value="F:structural constituent of virion"/>
    <property type="evidence" value="ECO:0007669"/>
    <property type="project" value="UniProtKB-KW"/>
</dbReference>
<dbReference type="GO" id="GO:0019068">
    <property type="term" value="P:virion assembly"/>
    <property type="evidence" value="ECO:0007669"/>
    <property type="project" value="InterPro"/>
</dbReference>
<dbReference type="FunFam" id="2.70.20.60:FF:000001">
    <property type="entry name" value="Matrix protein"/>
    <property type="match status" value="1"/>
</dbReference>
<dbReference type="Gene3D" id="2.70.20.60">
    <property type="entry name" value="Viral matrix protein, C-terminal domain"/>
    <property type="match status" value="1"/>
</dbReference>
<dbReference type="Gene3D" id="2.70.20.50">
    <property type="entry name" value="Viral matrix protein, N-terminal domain"/>
    <property type="match status" value="1"/>
</dbReference>
<dbReference type="InterPro" id="IPR042539">
    <property type="entry name" value="Matrix_C"/>
</dbReference>
<dbReference type="InterPro" id="IPR042540">
    <property type="entry name" value="Matrix_N"/>
</dbReference>
<dbReference type="InterPro" id="IPR055413">
    <property type="entry name" value="Matrix_Paramyxo_C"/>
</dbReference>
<dbReference type="InterPro" id="IPR000982">
    <property type="entry name" value="Matrix_Paramyxo_N"/>
</dbReference>
<dbReference type="Pfam" id="PF23765">
    <property type="entry name" value="Matrix_Paramyxo_C"/>
    <property type="match status" value="1"/>
</dbReference>
<dbReference type="Pfam" id="PF00661">
    <property type="entry name" value="Matrix_Paramyxo_N"/>
    <property type="match status" value="1"/>
</dbReference>
<comment type="function">
    <text evidence="1">The M protein has a crucial role in virus assembly and interacts with the RNP complex as well as with the viral membrane. Associates with phosphatidylserine (PS) and phosphatidylinositol 4,5-bisphosphate (PIP2) at the plasma membrane. Interaction with PIP2 triggers matrix protein lattice polymerization. Matrix proteins induce host membrane deformation and curvature necessary for virion assembly/budding.</text>
</comment>
<comment type="subunit">
    <text evidence="1">Homodimer. Dimerization is critical for virion formation. Interacts with host ANP32B.</text>
</comment>
<comment type="subcellular location">
    <subcellularLocation>
        <location evidence="1">Virion</location>
    </subcellularLocation>
    <subcellularLocation>
        <location evidence="1">Host cell membrane</location>
    </subcellularLocation>
</comment>
<organism>
    <name type="scientific">Measles virus (strain Yamagata-1)</name>
    <name type="common">MeV</name>
    <name type="synonym">Subacute sclerose panencephalitis virus</name>
    <dbReference type="NCBI Taxonomy" id="11239"/>
    <lineage>
        <taxon>Viruses</taxon>
        <taxon>Riboviria</taxon>
        <taxon>Orthornavirae</taxon>
        <taxon>Negarnaviricota</taxon>
        <taxon>Haploviricotina</taxon>
        <taxon>Monjiviricetes</taxon>
        <taxon>Mononegavirales</taxon>
        <taxon>Paramyxoviridae</taxon>
        <taxon>Orthoparamyxovirinae</taxon>
        <taxon>Morbillivirus</taxon>
        <taxon>Morbillivirus hominis</taxon>
        <taxon>Measles morbillivirus</taxon>
    </lineage>
</organism>
<proteinExistence type="inferred from homology"/>
<keyword id="KW-1032">Host cell membrane</keyword>
<keyword id="KW-1043">Host membrane</keyword>
<keyword id="KW-0945">Host-virus interaction</keyword>
<keyword id="KW-0446">Lipid-binding</keyword>
<keyword id="KW-0472">Membrane</keyword>
<keyword id="KW-0261">Viral envelope protein</keyword>
<keyword id="KW-0468">Viral matrix protein</keyword>
<keyword id="KW-0946">Virion</keyword>
<organismHost>
    <name type="scientific">Homo sapiens</name>
    <name type="common">Human</name>
    <dbReference type="NCBI Taxonomy" id="9606"/>
</organismHost>
<accession>P36356</accession>
<sequence>MHMFPLGVVEDSDPPGPPIGRASGSPPPGAGRSTAKPEELLKEATEANIVVRRTAGLNEKLAFHNNTPPTLPTPRRKAPTTGSVLNANQACNAVNLAPLDTPQRFRAVYMSITRPLDNGYYTVPRRMLEFRSVNAVAFNLLVTLRIDKAIGPGKIIDNAEQLPEATFMVHIGDFRRKKSEVYSADYCKMKIEKMGLVFALGGIGGTSLHTRSTGKMSKTLHAQLGFKKTSCYPPMDINEDLNRLLWRSRCKIVRIQAVLQPSVPQELRIYDDVIINDDQGVFKVLQTVVPSNARKRPPSQ</sequence>
<protein>
    <recommendedName>
        <fullName>Matrix protein</fullName>
    </recommendedName>
</protein>
<gene>
    <name type="primary">M</name>
</gene>
<reference key="1">
    <citation type="journal article" date="1990" name="Virus Genes">
        <title>Molecular analysis of structural protein genes of the Yamagata-1 strain of defective subacute sclerosing panencephalitis virus. II. Nucleotide sequence of a cDNA corresponding to the P plus M dicistronic mRNA.</title>
        <authorList>
            <person name="Yoshikawa Y."/>
            <person name="Tsuruoka H."/>
            <person name="Matsumoto M."/>
            <person name="Haga T."/>
            <person name="Shioda T."/>
            <person name="Shibuta H."/>
            <person name="Sato T.A."/>
            <person name="Yamanouchi K."/>
        </authorList>
    </citation>
    <scope>NUCLEOTIDE SEQUENCE</scope>
</reference>
<evidence type="ECO:0000250" key="1">
    <source>
        <dbReference type="UniProtKB" id="Q9W850"/>
    </source>
</evidence>
<evidence type="ECO:0000256" key="2">
    <source>
        <dbReference type="SAM" id="MobiDB-lite"/>
    </source>
</evidence>
<feature type="chain" id="PRO_0000142756" description="Matrix protein">
    <location>
        <begin position="1"/>
        <end position="300"/>
    </location>
</feature>
<feature type="region of interest" description="Disordered" evidence="2">
    <location>
        <begin position="1"/>
        <end position="36"/>
    </location>
</feature>